<comment type="function">
    <text evidence="1">Plays critical roles in virus replication, from virus entry and uncoating to assembly and budding of the virus particle. M1 binding to ribonucleocapsids (RNPs) in nucleus seems to inhibit viral transcription. Interaction of viral NEP with M1-RNP is thought to promote nuclear export of the complex, which is targeted to the virion assembly site at the apical plasma membrane in polarized epithelial cells. Interactions with NA and HA may bring M1, a non-raft-associated protein, into lipid rafts. Forms a continuous shell on the inner side of the lipid bilayer in virion, where it binds the RNP. During virus entry into cell, the M2 ion channel acidifies the internal virion core, inducing M1 dissociation from the RNP. M1-free RNPs are transported to the nucleus, where viral transcription and replication can take place.</text>
</comment>
<comment type="function">
    <text evidence="1">Determines the virion's shape: spherical or filamentous. Clinical isolates of influenza are characterized by the presence of significant proportion of filamentous virions, whereas after multiple passage on eggs or cell culture, virions have only spherical morphology. Filamentous virions are thought to be important to infect neighboring cells, and spherical virions more suited to spread through aerosol between hosts organisms.</text>
</comment>
<comment type="subunit">
    <text evidence="1">Homodimer and homomultimer. Interacts with NEP. Binds ribonucleocapsid by both interacting with genomic RNA and NP protein. May interact with HA and NA. Cannot bind NP without genomic RNA.</text>
</comment>
<comment type="subcellular location">
    <subcellularLocation>
        <location evidence="1">Virion membrane</location>
        <topology evidence="1">Peripheral membrane protein</topology>
        <orientation evidence="1">Cytoplasmic side</orientation>
    </subcellularLocation>
    <subcellularLocation>
        <location evidence="1">Host nucleus</location>
    </subcellularLocation>
</comment>
<comment type="alternative products">
    <event type="alternative splicing"/>
    <isoform>
        <id>Q2VC89-1</id>
        <name>M1</name>
        <sequence type="displayed"/>
    </isoform>
    <isoform>
        <id>Q2VC90-1</id>
        <name>M2</name>
        <sequence type="external"/>
    </isoform>
    <text>Only the first 9 residues are shared by the 2 isoforms.</text>
</comment>
<comment type="miscellaneous">
    <text>SC35 was derived from A/Seal/Massachussetts/1/80 (H7N7) by serial passages in chicken embryo cells, thereby acquiring a multibasic cleavage site in its hemagglutinin (HA) and becoming 100% lethal for chickens. SC35 was then passaged 11 times in mouse lung, yielding the mouse-adapted variant SC35M.</text>
</comment>
<comment type="miscellaneous">
    <text evidence="1">Most abundant protein in virion. When expressed alone can form virus-like particles in transfected cells.</text>
</comment>
<comment type="similarity">
    <text evidence="1">Belongs to the influenza viruses Matrix protein M1 family.</text>
</comment>
<name>M1_I80A2</name>
<feature type="chain" id="PRO_0000326310" description="Matrix protein 1">
    <location>
        <begin position="1"/>
        <end position="252"/>
    </location>
</feature>
<feature type="region of interest" description="Membrane-binding" evidence="1">
    <location>
        <begin position="1"/>
        <end position="164"/>
    </location>
</feature>
<feature type="region of interest" description="RNP-binding" evidence="1">
    <location>
        <begin position="165"/>
        <end position="252"/>
    </location>
</feature>
<feature type="short sequence motif" description="Nuclear localization signal" evidence="1">
    <location>
        <begin position="101"/>
        <end position="105"/>
    </location>
</feature>
<accession>Q2VC89</accession>
<gene>
    <name evidence="1" type="primary">M</name>
</gene>
<reference key="1">
    <citation type="journal article" date="2005" name="Proc. Natl. Acad. Sci. U.S.A.">
        <title>The viral polymerase mediates adaptation of an avian influenza virus to a mammalian host.</title>
        <authorList>
            <person name="Gabriel G."/>
            <person name="Dauber B."/>
            <person name="Wolff T."/>
            <person name="Planz O."/>
            <person name="Klenk H.D."/>
            <person name="Stech J."/>
        </authorList>
    </citation>
    <scope>NUCLEOTIDE SEQUENCE [GENOMIC RNA]</scope>
    <source>
        <strain>SC35M mouse-adapted</strain>
    </source>
</reference>
<dbReference type="EMBL" id="DQ266100">
    <property type="protein sequence ID" value="ABB90273.1"/>
    <property type="molecule type" value="Genomic_RNA"/>
</dbReference>
<dbReference type="SMR" id="Q2VC89"/>
<dbReference type="Proteomes" id="UP000008576">
    <property type="component" value="Genome"/>
</dbReference>
<dbReference type="GO" id="GO:0042025">
    <property type="term" value="C:host cell nucleus"/>
    <property type="evidence" value="ECO:0007669"/>
    <property type="project" value="UniProtKB-SubCell"/>
</dbReference>
<dbReference type="GO" id="GO:0016020">
    <property type="term" value="C:membrane"/>
    <property type="evidence" value="ECO:0007669"/>
    <property type="project" value="UniProtKB-KW"/>
</dbReference>
<dbReference type="GO" id="GO:0055036">
    <property type="term" value="C:virion membrane"/>
    <property type="evidence" value="ECO:0007669"/>
    <property type="project" value="UniProtKB-SubCell"/>
</dbReference>
<dbReference type="GO" id="GO:0003723">
    <property type="term" value="F:RNA binding"/>
    <property type="evidence" value="ECO:0007669"/>
    <property type="project" value="UniProtKB-UniRule"/>
</dbReference>
<dbReference type="GO" id="GO:0039660">
    <property type="term" value="F:structural constituent of virion"/>
    <property type="evidence" value="ECO:0007669"/>
    <property type="project" value="UniProtKB-UniRule"/>
</dbReference>
<dbReference type="GO" id="GO:0046761">
    <property type="term" value="P:viral budding from plasma membrane"/>
    <property type="evidence" value="ECO:0007669"/>
    <property type="project" value="UniProtKB-UniRule"/>
</dbReference>
<dbReference type="FunFam" id="1.10.10.180:FF:000001">
    <property type="entry name" value="Matrix protein 1"/>
    <property type="match status" value="1"/>
</dbReference>
<dbReference type="FunFam" id="1.20.91.10:FF:000001">
    <property type="entry name" value="Matrix protein 1"/>
    <property type="match status" value="1"/>
</dbReference>
<dbReference type="Gene3D" id="1.10.10.180">
    <property type="match status" value="1"/>
</dbReference>
<dbReference type="Gene3D" id="1.20.91.10">
    <property type="match status" value="1"/>
</dbReference>
<dbReference type="HAMAP" id="MF_04068">
    <property type="entry name" value="INFV_M1"/>
    <property type="match status" value="1"/>
</dbReference>
<dbReference type="InterPro" id="IPR036039">
    <property type="entry name" value="Flu_matrix_M1"/>
</dbReference>
<dbReference type="InterPro" id="IPR013188">
    <property type="entry name" value="Flu_matrix_M1_C"/>
</dbReference>
<dbReference type="InterPro" id="IPR001561">
    <property type="entry name" value="Flu_matrix_M1_N"/>
</dbReference>
<dbReference type="InterPro" id="IPR015423">
    <property type="entry name" value="Flu_matrix_M1_N_sub1"/>
</dbReference>
<dbReference type="InterPro" id="IPR015799">
    <property type="entry name" value="Flu_matrix_M1_N_sub2"/>
</dbReference>
<dbReference type="InterPro" id="IPR037533">
    <property type="entry name" value="INFV_M1"/>
</dbReference>
<dbReference type="Pfam" id="PF00598">
    <property type="entry name" value="Flu_M1"/>
    <property type="match status" value="1"/>
</dbReference>
<dbReference type="Pfam" id="PF08289">
    <property type="entry name" value="Flu_M1_C"/>
    <property type="match status" value="1"/>
</dbReference>
<dbReference type="SMART" id="SM00759">
    <property type="entry name" value="Flu_M1_C"/>
    <property type="match status" value="1"/>
</dbReference>
<dbReference type="SUPFAM" id="SSF48145">
    <property type="entry name" value="Influenza virus matrix protein M1"/>
    <property type="match status" value="1"/>
</dbReference>
<organismHost>
    <name type="scientific">Aves</name>
    <dbReference type="NCBI Taxonomy" id="8782"/>
</organismHost>
<organismHost>
    <name type="scientific">Equus caballus</name>
    <name type="common">Horse</name>
    <dbReference type="NCBI Taxonomy" id="9796"/>
</organismHost>
<organismHost>
    <name type="scientific">Homo sapiens</name>
    <name type="common">Human</name>
    <dbReference type="NCBI Taxonomy" id="9606"/>
</organismHost>
<organismHost>
    <name type="scientific">Phocidae</name>
    <name type="common">true seals</name>
    <dbReference type="NCBI Taxonomy" id="9709"/>
</organismHost>
<keyword id="KW-0025">Alternative splicing</keyword>
<keyword id="KW-1048">Host nucleus</keyword>
<keyword id="KW-0472">Membrane</keyword>
<keyword id="KW-0694">RNA-binding</keyword>
<keyword id="KW-0468">Viral matrix protein</keyword>
<keyword id="KW-0946">Virion</keyword>
<sequence>MSLLTEVETYVLSIVPSGPLKAEIAQRLEDVFAGKNTDLEALMEWLKTRPILSPLTKGILGFVFTLTVPSERGLQRRRFVQNALNGNGDPNNMDRAVKLYRKLKREITFHGAKEVALSYSTGALASCMGLIYNRMGTVTTEVAFGLVCATCERIADSQHRSHRQMVTTTNPLIRHENRMVLASTTAKAMEQMAGSSEQAAEAMEVASQARQMVQAMRTIGTHPSSSAGLKDDLLENLQAYQKRMGVQMQRFK</sequence>
<protein>
    <recommendedName>
        <fullName evidence="1">Matrix protein 1</fullName>
        <shortName evidence="1">M1</shortName>
    </recommendedName>
</protein>
<evidence type="ECO:0000255" key="1">
    <source>
        <dbReference type="HAMAP-Rule" id="MF_04068"/>
    </source>
</evidence>
<organism>
    <name type="scientific">Influenza A virus (strain A/Seal/Massachusetts/1/1980 H7N7)</name>
    <dbReference type="NCBI Taxonomy" id="384493"/>
    <lineage>
        <taxon>Viruses</taxon>
        <taxon>Riboviria</taxon>
        <taxon>Orthornavirae</taxon>
        <taxon>Negarnaviricota</taxon>
        <taxon>Polyploviricotina</taxon>
        <taxon>Insthoviricetes</taxon>
        <taxon>Articulavirales</taxon>
        <taxon>Orthomyxoviridae</taxon>
        <taxon>Alphainfluenzavirus</taxon>
        <taxon>Alphainfluenzavirus influenzae</taxon>
        <taxon>Influenza A virus</taxon>
    </lineage>
</organism>
<proteinExistence type="inferred from homology"/>